<reference key="1">
    <citation type="submission" date="2002-09" db="EMBL/GenBank/DDBJ databases">
        <title>Phylogenetic relationships among the major lineages of Asparagales based on a large chloroplast data set.</title>
        <authorList>
            <person name="McPherson M.A."/>
            <person name="Rai H.S."/>
            <person name="Wong W.A."/>
            <person name="Graham S.W."/>
        </authorList>
    </citation>
    <scope>NUCLEOTIDE SEQUENCE [GENOMIC DNA]</scope>
</reference>
<evidence type="ECO:0000255" key="1">
    <source>
        <dbReference type="HAMAP-Rule" id="MF_00445"/>
    </source>
</evidence>
<evidence type="ECO:0000305" key="2"/>
<organism>
    <name type="scientific">Asparagus officinalis</name>
    <name type="common">Garden asparagus</name>
    <dbReference type="NCBI Taxonomy" id="4686"/>
    <lineage>
        <taxon>Eukaryota</taxon>
        <taxon>Viridiplantae</taxon>
        <taxon>Streptophyta</taxon>
        <taxon>Embryophyta</taxon>
        <taxon>Tracheophyta</taxon>
        <taxon>Spermatophyta</taxon>
        <taxon>Magnoliopsida</taxon>
        <taxon>Liliopsida</taxon>
        <taxon>Asparagales</taxon>
        <taxon>Asparagaceae</taxon>
        <taxon>Asparagoideae</taxon>
        <taxon>Asparagus</taxon>
    </lineage>
</organism>
<protein>
    <recommendedName>
        <fullName evidence="1">NAD(P)H-quinone oxidoreductase subunit 2, chloroplastic</fullName>
        <ecNumber evidence="1">7.1.1.-</ecNumber>
    </recommendedName>
    <alternativeName>
        <fullName evidence="1">NAD(P)H dehydrogenase, subunit 2</fullName>
    </alternativeName>
    <alternativeName>
        <fullName evidence="1">NADH-plastoquinone oxidoreductase subunit 2</fullName>
    </alternativeName>
</protein>
<comment type="function">
    <text evidence="1">NDH shuttles electrons from NAD(P)H:plastoquinone, via FMN and iron-sulfur (Fe-S) centers, to quinones in the photosynthetic chain and possibly in a chloroplast respiratory chain. The immediate electron acceptor for the enzyme in this species is believed to be plastoquinone. Couples the redox reaction to proton translocation, and thus conserves the redox energy in a proton gradient.</text>
</comment>
<comment type="catalytic activity">
    <reaction evidence="1">
        <text>a plastoquinone + NADH + (n+1) H(+)(in) = a plastoquinol + NAD(+) + n H(+)(out)</text>
        <dbReference type="Rhea" id="RHEA:42608"/>
        <dbReference type="Rhea" id="RHEA-COMP:9561"/>
        <dbReference type="Rhea" id="RHEA-COMP:9562"/>
        <dbReference type="ChEBI" id="CHEBI:15378"/>
        <dbReference type="ChEBI" id="CHEBI:17757"/>
        <dbReference type="ChEBI" id="CHEBI:57540"/>
        <dbReference type="ChEBI" id="CHEBI:57945"/>
        <dbReference type="ChEBI" id="CHEBI:62192"/>
    </reaction>
</comment>
<comment type="catalytic activity">
    <reaction evidence="1">
        <text>a plastoquinone + NADPH + (n+1) H(+)(in) = a plastoquinol + NADP(+) + n H(+)(out)</text>
        <dbReference type="Rhea" id="RHEA:42612"/>
        <dbReference type="Rhea" id="RHEA-COMP:9561"/>
        <dbReference type="Rhea" id="RHEA-COMP:9562"/>
        <dbReference type="ChEBI" id="CHEBI:15378"/>
        <dbReference type="ChEBI" id="CHEBI:17757"/>
        <dbReference type="ChEBI" id="CHEBI:57783"/>
        <dbReference type="ChEBI" id="CHEBI:58349"/>
        <dbReference type="ChEBI" id="CHEBI:62192"/>
    </reaction>
</comment>
<comment type="subunit">
    <text evidence="1">NDH is composed of at least 16 different subunits, 5 of which are encoded in the nucleus.</text>
</comment>
<comment type="subcellular location">
    <subcellularLocation>
        <location evidence="1">Plastid</location>
        <location evidence="1">Chloroplast thylakoid membrane</location>
        <topology evidence="1">Multi-pass membrane protein</topology>
    </subcellularLocation>
</comment>
<comment type="similarity">
    <text evidence="1">Belongs to the complex I subunit 2 family.</text>
</comment>
<comment type="sequence caution" evidence="2">
    <conflict type="erroneous initiation">
        <sequence resource="EMBL-CDS" id="AAN32079"/>
    </conflict>
</comment>
<gene>
    <name evidence="1" type="primary">ndhB</name>
</gene>
<dbReference type="EC" id="7.1.1.-" evidence="1"/>
<dbReference type="EMBL" id="AY147491">
    <property type="protein sequence ID" value="AAN32079.1"/>
    <property type="status" value="ALT_INIT"/>
    <property type="molecule type" value="Genomic_DNA"/>
</dbReference>
<dbReference type="RefSeq" id="YP_009370065.1">
    <property type="nucleotide sequence ID" value="NC_034777.1"/>
</dbReference>
<dbReference type="RefSeq" id="YP_009370079.1">
    <property type="nucleotide sequence ID" value="NC_034777.1"/>
</dbReference>
<dbReference type="SMR" id="Q67IC4"/>
<dbReference type="GeneID" id="33018227"/>
<dbReference type="GeneID" id="33018263"/>
<dbReference type="GO" id="GO:0009535">
    <property type="term" value="C:chloroplast thylakoid membrane"/>
    <property type="evidence" value="ECO:0007669"/>
    <property type="project" value="UniProtKB-SubCell"/>
</dbReference>
<dbReference type="GO" id="GO:0008137">
    <property type="term" value="F:NADH dehydrogenase (ubiquinone) activity"/>
    <property type="evidence" value="ECO:0007669"/>
    <property type="project" value="InterPro"/>
</dbReference>
<dbReference type="GO" id="GO:0048038">
    <property type="term" value="F:quinone binding"/>
    <property type="evidence" value="ECO:0007669"/>
    <property type="project" value="UniProtKB-KW"/>
</dbReference>
<dbReference type="GO" id="GO:0042773">
    <property type="term" value="P:ATP synthesis coupled electron transport"/>
    <property type="evidence" value="ECO:0007669"/>
    <property type="project" value="InterPro"/>
</dbReference>
<dbReference type="GO" id="GO:0019684">
    <property type="term" value="P:photosynthesis, light reaction"/>
    <property type="evidence" value="ECO:0007669"/>
    <property type="project" value="UniProtKB-UniRule"/>
</dbReference>
<dbReference type="HAMAP" id="MF_00445">
    <property type="entry name" value="NDH1_NuoN_1"/>
    <property type="match status" value="1"/>
</dbReference>
<dbReference type="InterPro" id="IPR010096">
    <property type="entry name" value="NADH-Q_OxRdtase_suN/2"/>
</dbReference>
<dbReference type="InterPro" id="IPR001750">
    <property type="entry name" value="ND/Mrp_TM"/>
</dbReference>
<dbReference type="InterPro" id="IPR045693">
    <property type="entry name" value="Ndh2_N"/>
</dbReference>
<dbReference type="NCBIfam" id="TIGR01770">
    <property type="entry name" value="NDH_I_N"/>
    <property type="match status" value="1"/>
</dbReference>
<dbReference type="NCBIfam" id="NF002701">
    <property type="entry name" value="PRK02504.1"/>
    <property type="match status" value="1"/>
</dbReference>
<dbReference type="PANTHER" id="PTHR22773">
    <property type="entry name" value="NADH DEHYDROGENASE"/>
    <property type="match status" value="1"/>
</dbReference>
<dbReference type="Pfam" id="PF19530">
    <property type="entry name" value="Ndh2_N"/>
    <property type="match status" value="1"/>
</dbReference>
<dbReference type="Pfam" id="PF00361">
    <property type="entry name" value="Proton_antipo_M"/>
    <property type="match status" value="1"/>
</dbReference>
<dbReference type="PRINTS" id="PR01434">
    <property type="entry name" value="NADHDHGNASE5"/>
</dbReference>
<proteinExistence type="inferred from homology"/>
<feature type="chain" id="PRO_0000117656" description="NAD(P)H-quinone oxidoreductase subunit 2, chloroplastic">
    <location>
        <begin position="1"/>
        <end position="510"/>
    </location>
</feature>
<feature type="transmembrane region" description="Helical" evidence="1">
    <location>
        <begin position="24"/>
        <end position="44"/>
    </location>
</feature>
<feature type="transmembrane region" description="Helical" evidence="1">
    <location>
        <begin position="59"/>
        <end position="79"/>
    </location>
</feature>
<feature type="transmembrane region" description="Helical" evidence="1">
    <location>
        <begin position="99"/>
        <end position="119"/>
    </location>
</feature>
<feature type="transmembrane region" description="Helical" evidence="1">
    <location>
        <begin position="124"/>
        <end position="144"/>
    </location>
</feature>
<feature type="transmembrane region" description="Helical" evidence="1">
    <location>
        <begin position="149"/>
        <end position="169"/>
    </location>
</feature>
<feature type="transmembrane region" description="Helical" evidence="1">
    <location>
        <begin position="183"/>
        <end position="203"/>
    </location>
</feature>
<feature type="transmembrane region" description="Helical" evidence="1">
    <location>
        <begin position="295"/>
        <end position="315"/>
    </location>
</feature>
<feature type="transmembrane region" description="Helical" evidence="1">
    <location>
        <begin position="323"/>
        <end position="343"/>
    </location>
</feature>
<feature type="transmembrane region" description="Helical" evidence="1">
    <location>
        <begin position="347"/>
        <end position="367"/>
    </location>
</feature>
<feature type="transmembrane region" description="Helical" evidence="1">
    <location>
        <begin position="395"/>
        <end position="415"/>
    </location>
</feature>
<feature type="transmembrane region" description="Helical" evidence="1">
    <location>
        <begin position="418"/>
        <end position="438"/>
    </location>
</feature>
<name>NU2C_ASPOF</name>
<sequence>MIWHVQNENFILDSTRILMKAFHLLLFHGSFIFPECILIFGLILLLMIDSTSDQKDRPWFYFISSTSLVMSITALLFRWKEEPIISFSGNFQTNNFNEIFQFLILLCSTLCIPLSVEYIECTEMAITEFLLFVLTATLGGMFLCGANDLITIFVAPECFSLCSYLLSGYTKRDVRSNEATTKYLLMGGASSSILVHGFSWLYGSSGGEIELQEIVNGLINTQMYNSPGISIALISTTVGIGFKLSPAPFHQWTPDVYEGSPTPVVAFLSVTSKVAASASATRIFDIPFYFSSNEWHLLLEILAILSMILGNLIAITQTSMKRMLAYSSIGQIGYVIIGIIVGDSNDGYASMITYMLFYISMNLGTFARIVSFGLRTGTDNIRDYAGLYTKDPFLALSSALCLLSLGGLPPLAGFFGKLYLFWCGWQAGLYFLVSIGLLTSVVSIYYYLKIIKLLMTGRNQEITPHVRNYRRSPLRSNNSIEWSMTVCVIASTIPGISMNPILAIAQDTLF</sequence>
<geneLocation type="chloroplast"/>
<keyword id="KW-0150">Chloroplast</keyword>
<keyword id="KW-0472">Membrane</keyword>
<keyword id="KW-0520">NAD</keyword>
<keyword id="KW-0521">NADP</keyword>
<keyword id="KW-0934">Plastid</keyword>
<keyword id="KW-0618">Plastoquinone</keyword>
<keyword id="KW-0874">Quinone</keyword>
<keyword id="KW-0793">Thylakoid</keyword>
<keyword id="KW-1278">Translocase</keyword>
<keyword id="KW-0812">Transmembrane</keyword>
<keyword id="KW-1133">Transmembrane helix</keyword>
<keyword id="KW-0813">Transport</keyword>
<accession>Q67IC4</accession>